<feature type="chain" id="PRO_0000150758" description="Olfactory receptor 51I2">
    <location>
        <begin position="1"/>
        <end position="312"/>
    </location>
</feature>
<feature type="topological domain" description="Extracellular" evidence="1">
    <location>
        <begin position="1"/>
        <end position="25"/>
    </location>
</feature>
<feature type="transmembrane region" description="Helical; Name=1" evidence="1">
    <location>
        <begin position="26"/>
        <end position="46"/>
    </location>
</feature>
<feature type="topological domain" description="Cytoplasmic" evidence="1">
    <location>
        <begin position="47"/>
        <end position="54"/>
    </location>
</feature>
<feature type="transmembrane region" description="Helical; Name=2" evidence="1">
    <location>
        <begin position="55"/>
        <end position="75"/>
    </location>
</feature>
<feature type="topological domain" description="Extracellular" evidence="1">
    <location>
        <begin position="76"/>
        <end position="99"/>
    </location>
</feature>
<feature type="transmembrane region" description="Helical; Name=3" evidence="1">
    <location>
        <begin position="100"/>
        <end position="120"/>
    </location>
</feature>
<feature type="topological domain" description="Cytoplasmic" evidence="1">
    <location>
        <begin position="121"/>
        <end position="139"/>
    </location>
</feature>
<feature type="transmembrane region" description="Helical; Name=4" evidence="1">
    <location>
        <begin position="140"/>
        <end position="160"/>
    </location>
</feature>
<feature type="topological domain" description="Extracellular" evidence="1">
    <location>
        <begin position="161"/>
        <end position="196"/>
    </location>
</feature>
<feature type="transmembrane region" description="Helical; Name=5" evidence="1">
    <location>
        <begin position="197"/>
        <end position="217"/>
    </location>
</feature>
<feature type="topological domain" description="Cytoplasmic" evidence="1">
    <location>
        <begin position="218"/>
        <end position="237"/>
    </location>
</feature>
<feature type="transmembrane region" description="Helical; Name=6" evidence="1">
    <location>
        <begin position="238"/>
        <end position="258"/>
    </location>
</feature>
<feature type="topological domain" description="Extracellular" evidence="1">
    <location>
        <begin position="259"/>
        <end position="273"/>
    </location>
</feature>
<feature type="transmembrane region" description="Helical; Name=7" evidence="1">
    <location>
        <begin position="274"/>
        <end position="294"/>
    </location>
</feature>
<feature type="topological domain" description="Cytoplasmic" evidence="1">
    <location>
        <begin position="295"/>
        <end position="312"/>
    </location>
</feature>
<feature type="glycosylation site" description="N-linked (GlcNAc...) asparagine" evidence="1">
    <location>
        <position position="5"/>
    </location>
</feature>
<feature type="disulfide bond" evidence="2">
    <location>
        <begin position="97"/>
        <end position="189"/>
    </location>
</feature>
<feature type="sequence variant" id="VAR_034321" description="In dbSNP:rs10450603.">
    <original>R</original>
    <variation>C</variation>
    <location>
        <position position="122"/>
    </location>
</feature>
<feature type="sequence variant" id="VAR_034322" description="In dbSNP:rs12577167.">
    <original>T</original>
    <variation>A</variation>
    <location>
        <position position="134"/>
    </location>
</feature>
<feature type="sequence variant" id="VAR_034323" description="In dbSNP:rs16931292.">
    <original>R</original>
    <variation>P</variation>
    <location>
        <position position="151"/>
    </location>
</feature>
<feature type="sequence variant" id="VAR_024143" description="In dbSNP:rs11037502." evidence="3">
    <original>R</original>
    <variation>H</variation>
    <location>
        <position position="263"/>
    </location>
</feature>
<comment type="function">
    <text evidence="4">Odorant receptor.</text>
</comment>
<comment type="subcellular location">
    <subcellularLocation>
        <location>Cell membrane</location>
        <topology>Multi-pass membrane protein</topology>
    </subcellularLocation>
</comment>
<comment type="similarity">
    <text evidence="2">Belongs to the G-protein coupled receptor 1 family.</text>
</comment>
<comment type="online information" name="Human Olfactory Receptor Data Exploratorium (HORDE)">
    <link uri="https://genome.weizmann.ac.il/horde/card/index/symbol:OR51I2/term:OR51I2/type:keyword"/>
</comment>
<proteinExistence type="evidence at transcript level"/>
<accession>Q9H344</accession>
<accession>B9EIL6</accession>
<accession>Q6IF81</accession>
<sequence>MGLFNVTHPAFFLLTGIPGLESSHSWLSGPLCVMYAVALGGNTVILQAVRVEPSLHEPMYYFLSMLSFSDVAISMATLPTVLRTFCLNARNITFDACLIQMFLIHFFSMMESGILLAMSFDRYVAICDPLRYATVLTTEVIAAMGLGAAARSFITLFPLPFLIKRLPICRSNVLSHSYCLHPDMMRLACADISINSIYGLFVLVSTFGMDLFFIFLSYVLILRSVMATASREERLKALNTCVSHILAVLAFYVPMIGVSTVHRFGKHVPCYIHVLMSNVYLFVPPVLNPLIYSAKTKEIRRAIFRMFHHIKI</sequence>
<evidence type="ECO:0000255" key="1"/>
<evidence type="ECO:0000255" key="2">
    <source>
        <dbReference type="PROSITE-ProRule" id="PRU00521"/>
    </source>
</evidence>
<evidence type="ECO:0000269" key="3">
    <source>
    </source>
</evidence>
<evidence type="ECO:0000305" key="4"/>
<protein>
    <recommendedName>
        <fullName>Olfactory receptor 51I2</fullName>
    </recommendedName>
    <alternativeName>
        <fullName>Odorant receptor HOR5'beta12</fullName>
    </alternativeName>
    <alternativeName>
        <fullName>Olfactory receptor OR11-38</fullName>
    </alternativeName>
</protein>
<gene>
    <name type="primary">OR51I2</name>
</gene>
<keyword id="KW-1003">Cell membrane</keyword>
<keyword id="KW-1015">Disulfide bond</keyword>
<keyword id="KW-0297">G-protein coupled receptor</keyword>
<keyword id="KW-0325">Glycoprotein</keyword>
<keyword id="KW-0472">Membrane</keyword>
<keyword id="KW-0552">Olfaction</keyword>
<keyword id="KW-0675">Receptor</keyword>
<keyword id="KW-1185">Reference proteome</keyword>
<keyword id="KW-0716">Sensory transduction</keyword>
<keyword id="KW-0807">Transducer</keyword>
<keyword id="KW-0812">Transmembrane</keyword>
<keyword id="KW-1133">Transmembrane helix</keyword>
<name>O51I2_HUMAN</name>
<organism>
    <name type="scientific">Homo sapiens</name>
    <name type="common">Human</name>
    <dbReference type="NCBI Taxonomy" id="9606"/>
    <lineage>
        <taxon>Eukaryota</taxon>
        <taxon>Metazoa</taxon>
        <taxon>Chordata</taxon>
        <taxon>Craniata</taxon>
        <taxon>Vertebrata</taxon>
        <taxon>Euteleostomi</taxon>
        <taxon>Mammalia</taxon>
        <taxon>Eutheria</taxon>
        <taxon>Euarchontoglires</taxon>
        <taxon>Primates</taxon>
        <taxon>Haplorrhini</taxon>
        <taxon>Catarrhini</taxon>
        <taxon>Hominidae</taxon>
        <taxon>Homo</taxon>
    </lineage>
</organism>
<dbReference type="EMBL" id="AF137396">
    <property type="protein sequence ID" value="AAG41678.1"/>
    <property type="molecule type" value="Genomic_DNA"/>
</dbReference>
<dbReference type="EMBL" id="BC140730">
    <property type="protein sequence ID" value="AAI40731.1"/>
    <property type="molecule type" value="mRNA"/>
</dbReference>
<dbReference type="EMBL" id="BK004381">
    <property type="protein sequence ID" value="DAA04779.1"/>
    <property type="molecule type" value="Genomic_DNA"/>
</dbReference>
<dbReference type="CCDS" id="CCDS31383.1"/>
<dbReference type="RefSeq" id="NP_001004754.1">
    <property type="nucleotide sequence ID" value="NM_001004754.3"/>
</dbReference>
<dbReference type="SMR" id="Q9H344"/>
<dbReference type="FunCoup" id="Q9H344">
    <property type="interactions" value="467"/>
</dbReference>
<dbReference type="STRING" id="9606.ENSP00000493016"/>
<dbReference type="GlyCosmos" id="Q9H344">
    <property type="glycosylation" value="1 site, No reported glycans"/>
</dbReference>
<dbReference type="GlyGen" id="Q9H344">
    <property type="glycosylation" value="1 site"/>
</dbReference>
<dbReference type="iPTMnet" id="Q9H344"/>
<dbReference type="PhosphoSitePlus" id="Q9H344"/>
<dbReference type="BioMuta" id="OR51I2"/>
<dbReference type="DMDM" id="14423836"/>
<dbReference type="PaxDb" id="9606-ENSP00000341987"/>
<dbReference type="Antibodypedia" id="57765">
    <property type="antibodies" value="59 antibodies from 19 providers"/>
</dbReference>
<dbReference type="DNASU" id="390064"/>
<dbReference type="Ensembl" id="ENST00000641930.1">
    <property type="protein sequence ID" value="ENSP00000493016.1"/>
    <property type="gene ID" value="ENSG00000187918.6"/>
</dbReference>
<dbReference type="GeneID" id="390064"/>
<dbReference type="KEGG" id="hsa:390064"/>
<dbReference type="MANE-Select" id="ENST00000641930.1">
    <property type="protein sequence ID" value="ENSP00000493016.1"/>
    <property type="RefSeq nucleotide sequence ID" value="NM_001004754.3"/>
    <property type="RefSeq protein sequence ID" value="NP_001004754.1"/>
</dbReference>
<dbReference type="UCSC" id="uc010qzf.3">
    <property type="organism name" value="human"/>
</dbReference>
<dbReference type="AGR" id="HGNC:15201"/>
<dbReference type="CTD" id="390064"/>
<dbReference type="DisGeNET" id="390064"/>
<dbReference type="GeneCards" id="OR51I2"/>
<dbReference type="HGNC" id="HGNC:15201">
    <property type="gene designation" value="OR51I2"/>
</dbReference>
<dbReference type="HPA" id="ENSG00000187918">
    <property type="expression patterns" value="Not detected"/>
</dbReference>
<dbReference type="neXtProt" id="NX_Q9H344"/>
<dbReference type="OpenTargets" id="ENSG00000187918"/>
<dbReference type="PharmGKB" id="PA32381"/>
<dbReference type="VEuPathDB" id="HostDB:ENSG00000187918"/>
<dbReference type="eggNOG" id="ENOG502RTZR">
    <property type="taxonomic scope" value="Eukaryota"/>
</dbReference>
<dbReference type="GeneTree" id="ENSGT01130000278321"/>
<dbReference type="HOGENOM" id="CLU_012526_0_0_1"/>
<dbReference type="InParanoid" id="Q9H344"/>
<dbReference type="OMA" id="CLNARSI"/>
<dbReference type="OrthoDB" id="9444602at2759"/>
<dbReference type="PAN-GO" id="Q9H344">
    <property type="GO annotations" value="2 GO annotations based on evolutionary models"/>
</dbReference>
<dbReference type="PhylomeDB" id="Q9H344"/>
<dbReference type="TreeFam" id="TF342735"/>
<dbReference type="PathwayCommons" id="Q9H344"/>
<dbReference type="Reactome" id="R-HSA-9752946">
    <property type="pathway name" value="Expression and translocation of olfactory receptors"/>
</dbReference>
<dbReference type="BioGRID-ORCS" id="390064">
    <property type="hits" value="23 hits in 739 CRISPR screens"/>
</dbReference>
<dbReference type="GeneWiki" id="OR51I2"/>
<dbReference type="GenomeRNAi" id="390064"/>
<dbReference type="Pharos" id="Q9H344">
    <property type="development level" value="Tdark"/>
</dbReference>
<dbReference type="PRO" id="PR:Q9H344"/>
<dbReference type="Proteomes" id="UP000005640">
    <property type="component" value="Chromosome 11"/>
</dbReference>
<dbReference type="RNAct" id="Q9H344">
    <property type="molecule type" value="protein"/>
</dbReference>
<dbReference type="Bgee" id="ENSG00000187918">
    <property type="expression patterns" value="Expressed in tibialis anterior and 3 other cell types or tissues"/>
</dbReference>
<dbReference type="ExpressionAtlas" id="Q9H344">
    <property type="expression patterns" value="baseline and differential"/>
</dbReference>
<dbReference type="GO" id="GO:0016020">
    <property type="term" value="C:membrane"/>
    <property type="evidence" value="ECO:0000303"/>
    <property type="project" value="UniProtKB"/>
</dbReference>
<dbReference type="GO" id="GO:0005886">
    <property type="term" value="C:plasma membrane"/>
    <property type="evidence" value="ECO:0000318"/>
    <property type="project" value="GO_Central"/>
</dbReference>
<dbReference type="GO" id="GO:0004930">
    <property type="term" value="F:G protein-coupled receptor activity"/>
    <property type="evidence" value="ECO:0007669"/>
    <property type="project" value="UniProtKB-KW"/>
</dbReference>
<dbReference type="GO" id="GO:0004984">
    <property type="term" value="F:olfactory receptor activity"/>
    <property type="evidence" value="ECO:0000318"/>
    <property type="project" value="GO_Central"/>
</dbReference>
<dbReference type="GO" id="GO:0007608">
    <property type="term" value="P:sensory perception of smell"/>
    <property type="evidence" value="ECO:0000303"/>
    <property type="project" value="UniProtKB"/>
</dbReference>
<dbReference type="CDD" id="cd15222">
    <property type="entry name" value="7tmA_OR51-like"/>
    <property type="match status" value="1"/>
</dbReference>
<dbReference type="FunFam" id="1.20.1070.10:FF:000002">
    <property type="entry name" value="Olfactory receptor"/>
    <property type="match status" value="1"/>
</dbReference>
<dbReference type="Gene3D" id="1.20.1070.10">
    <property type="entry name" value="Rhodopsin 7-helix transmembrane proteins"/>
    <property type="match status" value="1"/>
</dbReference>
<dbReference type="InterPro" id="IPR000276">
    <property type="entry name" value="GPCR_Rhodpsn"/>
</dbReference>
<dbReference type="InterPro" id="IPR017452">
    <property type="entry name" value="GPCR_Rhodpsn_7TM"/>
</dbReference>
<dbReference type="InterPro" id="IPR000725">
    <property type="entry name" value="Olfact_rcpt"/>
</dbReference>
<dbReference type="InterPro" id="IPR050402">
    <property type="entry name" value="OR51/52/56-like"/>
</dbReference>
<dbReference type="PANTHER" id="PTHR26450:SF112">
    <property type="entry name" value="OLFACTORY RECEPTOR 51I2"/>
    <property type="match status" value="1"/>
</dbReference>
<dbReference type="PANTHER" id="PTHR26450">
    <property type="entry name" value="OLFACTORY RECEPTOR 56B1-RELATED"/>
    <property type="match status" value="1"/>
</dbReference>
<dbReference type="Pfam" id="PF13853">
    <property type="entry name" value="7tm_4"/>
    <property type="match status" value="1"/>
</dbReference>
<dbReference type="PRINTS" id="PR00237">
    <property type="entry name" value="GPCRRHODOPSN"/>
</dbReference>
<dbReference type="PRINTS" id="PR00245">
    <property type="entry name" value="OLFACTORYR"/>
</dbReference>
<dbReference type="SMART" id="SM01381">
    <property type="entry name" value="7TM_GPCR_Srsx"/>
    <property type="match status" value="1"/>
</dbReference>
<dbReference type="SUPFAM" id="SSF81321">
    <property type="entry name" value="Family A G protein-coupled receptor-like"/>
    <property type="match status" value="1"/>
</dbReference>
<dbReference type="PROSITE" id="PS00237">
    <property type="entry name" value="G_PROTEIN_RECEP_F1_1"/>
    <property type="match status" value="1"/>
</dbReference>
<dbReference type="PROSITE" id="PS50262">
    <property type="entry name" value="G_PROTEIN_RECEP_F1_2"/>
    <property type="match status" value="1"/>
</dbReference>
<reference key="1">
    <citation type="journal article" date="2000" name="Proc. Natl. Acad. Sci. U.S.A.">
        <title>Comparative structural and functional analysis of the olfactory receptor genes flanking the human and mouse beta-globin gene clusters.</title>
        <authorList>
            <person name="Bulger M."/>
            <person name="Bender M.A."/>
            <person name="van Doorninck J.H."/>
            <person name="Wertman B."/>
            <person name="Farrell C.M."/>
            <person name="Felsenfeld G."/>
            <person name="Groudine M."/>
            <person name="Hardison R."/>
        </authorList>
    </citation>
    <scope>NUCLEOTIDE SEQUENCE [GENOMIC DNA]</scope>
</reference>
<reference key="2">
    <citation type="journal article" date="2004" name="Genome Res.">
        <title>The status, quality, and expansion of the NIH full-length cDNA project: the Mammalian Gene Collection (MGC).</title>
        <authorList>
            <consortium name="The MGC Project Team"/>
        </authorList>
    </citation>
    <scope>NUCLEOTIDE SEQUENCE [LARGE SCALE MRNA]</scope>
    <scope>VARIANT HIS-263</scope>
    <source>
        <tissue>Brain</tissue>
    </source>
</reference>
<reference key="3">
    <citation type="journal article" date="2004" name="Proc. Natl. Acad. Sci. U.S.A.">
        <title>The human olfactory receptor gene family.</title>
        <authorList>
            <person name="Malnic B."/>
            <person name="Godfrey P.A."/>
            <person name="Buck L.B."/>
        </authorList>
    </citation>
    <scope>IDENTIFICATION</scope>
</reference>
<reference key="4">
    <citation type="journal article" date="2004" name="Proc. Natl. Acad. Sci. U.S.A.">
        <authorList>
            <person name="Malnic B."/>
            <person name="Godfrey P.A."/>
            <person name="Buck L.B."/>
        </authorList>
    </citation>
    <scope>ERRATUM OF PUBMED:14983052</scope>
</reference>